<accession>Q0VQQ0</accession>
<name>LOLD_ALCBS</name>
<gene>
    <name evidence="1" type="primary">lolD</name>
    <name type="ordered locus">ABO_1050</name>
</gene>
<evidence type="ECO:0000255" key="1">
    <source>
        <dbReference type="HAMAP-Rule" id="MF_01708"/>
    </source>
</evidence>
<evidence type="ECO:0000305" key="2"/>
<sequence>MNNSTPVLQAKKLVKAYEEGDNELEVLRGVELTVNKGDILAIIGASGSGKSTLLNLLGGLDHATRGSVAIAGTSVASLNDRETGRLRNRYLGFVYQFHHLLPEFTALENVAMPLLIRGDKPSDCQARSAEILERVGLGPRLKHKPSALSGGERQRVAIARALVTEPALVMADEPTGNLDERTAAQVQALMIELNEKLGTAFMIVTHDREFAARCPQQYELHDGLLRRL</sequence>
<protein>
    <recommendedName>
        <fullName evidence="1">Lipoprotein-releasing system ATP-binding protein LolD</fullName>
        <ecNumber evidence="1">7.6.2.-</ecNumber>
    </recommendedName>
</protein>
<dbReference type="EC" id="7.6.2.-" evidence="1"/>
<dbReference type="EMBL" id="AM286690">
    <property type="protein sequence ID" value="CAL16498.1"/>
    <property type="status" value="ALT_INIT"/>
    <property type="molecule type" value="Genomic_DNA"/>
</dbReference>
<dbReference type="RefSeq" id="WP_035458447.1">
    <property type="nucleotide sequence ID" value="NC_008260.1"/>
</dbReference>
<dbReference type="SMR" id="Q0VQQ0"/>
<dbReference type="STRING" id="393595.ABO_1050"/>
<dbReference type="KEGG" id="abo:ABO_1050"/>
<dbReference type="eggNOG" id="COG1136">
    <property type="taxonomic scope" value="Bacteria"/>
</dbReference>
<dbReference type="HOGENOM" id="CLU_000604_1_22_6"/>
<dbReference type="OrthoDB" id="9801477at2"/>
<dbReference type="Proteomes" id="UP000008871">
    <property type="component" value="Chromosome"/>
</dbReference>
<dbReference type="GO" id="GO:0005886">
    <property type="term" value="C:plasma membrane"/>
    <property type="evidence" value="ECO:0007669"/>
    <property type="project" value="UniProtKB-SubCell"/>
</dbReference>
<dbReference type="GO" id="GO:0005524">
    <property type="term" value="F:ATP binding"/>
    <property type="evidence" value="ECO:0007669"/>
    <property type="project" value="UniProtKB-KW"/>
</dbReference>
<dbReference type="GO" id="GO:0016887">
    <property type="term" value="F:ATP hydrolysis activity"/>
    <property type="evidence" value="ECO:0007669"/>
    <property type="project" value="InterPro"/>
</dbReference>
<dbReference type="GO" id="GO:0044873">
    <property type="term" value="P:lipoprotein localization to membrane"/>
    <property type="evidence" value="ECO:0007669"/>
    <property type="project" value="InterPro"/>
</dbReference>
<dbReference type="CDD" id="cd03255">
    <property type="entry name" value="ABC_MJ0796_LolCDE_FtsE"/>
    <property type="match status" value="1"/>
</dbReference>
<dbReference type="FunFam" id="3.40.50.300:FF:000230">
    <property type="entry name" value="Lipoprotein-releasing system ATP-binding protein LolD"/>
    <property type="match status" value="1"/>
</dbReference>
<dbReference type="Gene3D" id="3.40.50.300">
    <property type="entry name" value="P-loop containing nucleotide triphosphate hydrolases"/>
    <property type="match status" value="1"/>
</dbReference>
<dbReference type="InterPro" id="IPR003593">
    <property type="entry name" value="AAA+_ATPase"/>
</dbReference>
<dbReference type="InterPro" id="IPR003439">
    <property type="entry name" value="ABC_transporter-like_ATP-bd"/>
</dbReference>
<dbReference type="InterPro" id="IPR017871">
    <property type="entry name" value="ABC_transporter-like_CS"/>
</dbReference>
<dbReference type="InterPro" id="IPR011924">
    <property type="entry name" value="LolD_lipo_ATP-bd"/>
</dbReference>
<dbReference type="InterPro" id="IPR017911">
    <property type="entry name" value="MacB-like_ATP-bd"/>
</dbReference>
<dbReference type="InterPro" id="IPR027417">
    <property type="entry name" value="P-loop_NTPase"/>
</dbReference>
<dbReference type="NCBIfam" id="TIGR02211">
    <property type="entry name" value="LolD_lipo_ex"/>
    <property type="match status" value="1"/>
</dbReference>
<dbReference type="PANTHER" id="PTHR42798:SF2">
    <property type="entry name" value="ABC TRANSPORTER ATP-BINDING PROTEIN MG467-RELATED"/>
    <property type="match status" value="1"/>
</dbReference>
<dbReference type="PANTHER" id="PTHR42798">
    <property type="entry name" value="LIPOPROTEIN-RELEASING SYSTEM ATP-BINDING PROTEIN LOLD"/>
    <property type="match status" value="1"/>
</dbReference>
<dbReference type="Pfam" id="PF00005">
    <property type="entry name" value="ABC_tran"/>
    <property type="match status" value="1"/>
</dbReference>
<dbReference type="SMART" id="SM00382">
    <property type="entry name" value="AAA"/>
    <property type="match status" value="1"/>
</dbReference>
<dbReference type="SUPFAM" id="SSF52540">
    <property type="entry name" value="P-loop containing nucleoside triphosphate hydrolases"/>
    <property type="match status" value="1"/>
</dbReference>
<dbReference type="PROSITE" id="PS00211">
    <property type="entry name" value="ABC_TRANSPORTER_1"/>
    <property type="match status" value="1"/>
</dbReference>
<dbReference type="PROSITE" id="PS50893">
    <property type="entry name" value="ABC_TRANSPORTER_2"/>
    <property type="match status" value="1"/>
</dbReference>
<dbReference type="PROSITE" id="PS51244">
    <property type="entry name" value="LOLD"/>
    <property type="match status" value="1"/>
</dbReference>
<keyword id="KW-0067">ATP-binding</keyword>
<keyword id="KW-0997">Cell inner membrane</keyword>
<keyword id="KW-1003">Cell membrane</keyword>
<keyword id="KW-0472">Membrane</keyword>
<keyword id="KW-0547">Nucleotide-binding</keyword>
<keyword id="KW-1185">Reference proteome</keyword>
<keyword id="KW-1278">Translocase</keyword>
<keyword id="KW-0813">Transport</keyword>
<comment type="function">
    <text evidence="1">Part of the ABC transporter complex LolCDE involved in the translocation of mature outer membrane-directed lipoproteins, from the inner membrane to the periplasmic chaperone, LolA. Responsible for the formation of the LolA-lipoprotein complex in an ATP-dependent manner.</text>
</comment>
<comment type="subunit">
    <text evidence="1">The complex is composed of two ATP-binding proteins (LolD) and two transmembrane proteins (LolC and LolE).</text>
</comment>
<comment type="subcellular location">
    <subcellularLocation>
        <location evidence="1">Cell inner membrane</location>
        <topology evidence="1">Peripheral membrane protein</topology>
    </subcellularLocation>
</comment>
<comment type="similarity">
    <text evidence="1">Belongs to the ABC transporter superfamily. Lipoprotein translocase (TC 3.A.1.125) family.</text>
</comment>
<comment type="sequence caution" evidence="2">
    <conflict type="erroneous initiation">
        <sequence resource="EMBL-CDS" id="CAL16498"/>
    </conflict>
</comment>
<feature type="chain" id="PRO_0000272051" description="Lipoprotein-releasing system ATP-binding protein LolD">
    <location>
        <begin position="1"/>
        <end position="228"/>
    </location>
</feature>
<feature type="domain" description="ABC transporter" evidence="1">
    <location>
        <begin position="8"/>
        <end position="228"/>
    </location>
</feature>
<feature type="binding site" evidence="1">
    <location>
        <begin position="44"/>
        <end position="51"/>
    </location>
    <ligand>
        <name>ATP</name>
        <dbReference type="ChEBI" id="CHEBI:30616"/>
    </ligand>
</feature>
<proteinExistence type="inferred from homology"/>
<reference key="1">
    <citation type="journal article" date="2006" name="Nat. Biotechnol.">
        <title>Genome sequence of the ubiquitous hydrocarbon-degrading marine bacterium Alcanivorax borkumensis.</title>
        <authorList>
            <person name="Schneiker S."/>
            <person name="Martins dos Santos V.A.P."/>
            <person name="Bartels D."/>
            <person name="Bekel T."/>
            <person name="Brecht M."/>
            <person name="Buhrmester J."/>
            <person name="Chernikova T.N."/>
            <person name="Denaro R."/>
            <person name="Ferrer M."/>
            <person name="Gertler C."/>
            <person name="Goesmann A."/>
            <person name="Golyshina O.V."/>
            <person name="Kaminski F."/>
            <person name="Khachane A.N."/>
            <person name="Lang S."/>
            <person name="Linke B."/>
            <person name="McHardy A.C."/>
            <person name="Meyer F."/>
            <person name="Nechitaylo T."/>
            <person name="Puehler A."/>
            <person name="Regenhardt D."/>
            <person name="Rupp O."/>
            <person name="Sabirova J.S."/>
            <person name="Selbitschka W."/>
            <person name="Yakimov M.M."/>
            <person name="Timmis K.N."/>
            <person name="Vorhoelter F.-J."/>
            <person name="Weidner S."/>
            <person name="Kaiser O."/>
            <person name="Golyshin P.N."/>
        </authorList>
    </citation>
    <scope>NUCLEOTIDE SEQUENCE [LARGE SCALE GENOMIC DNA]</scope>
    <source>
        <strain>ATCC 700651 / DSM 11573 / NCIMB 13689 / SK2</strain>
    </source>
</reference>
<organism>
    <name type="scientific">Alcanivorax borkumensis (strain ATCC 700651 / DSM 11573 / NCIMB 13689 / SK2)</name>
    <dbReference type="NCBI Taxonomy" id="393595"/>
    <lineage>
        <taxon>Bacteria</taxon>
        <taxon>Pseudomonadati</taxon>
        <taxon>Pseudomonadota</taxon>
        <taxon>Gammaproteobacteria</taxon>
        <taxon>Oceanospirillales</taxon>
        <taxon>Alcanivoracaceae</taxon>
        <taxon>Alcanivorax</taxon>
    </lineage>
</organism>